<proteinExistence type="evidence at transcript level"/>
<comment type="function">
    <text evidence="1">Mitochondrial trifunctional enzyme catalyzes the last three of the four reactions of the mitochondrial beta-oxidation pathway. The mitochondrial beta-oxidation pathway is the major energy-producing process in tissues and is performed through four consecutive reactions breaking down fatty acids into acetyl-CoA. Among the enzymes involved in this pathway, the trifunctional enzyme exhibits specificity for long-chain fatty acids. Mitochondrial trifunctional enzyme is a heterotetrameric complex composed of two proteins, the trifunctional enzyme subunit alpha/HADHA carries the 2,3-enoyl-CoA hydratase and the 3-hydroxyacyl-CoA dehydrogenase activities, while the trifunctional enzyme subunit beta/HADHB described here bears the 3-ketoacyl-CoA thiolase activity.</text>
</comment>
<comment type="catalytic activity">
    <reaction evidence="1">
        <text>an acyl-CoA + acetyl-CoA = a 3-oxoacyl-CoA + CoA</text>
        <dbReference type="Rhea" id="RHEA:21564"/>
        <dbReference type="ChEBI" id="CHEBI:57287"/>
        <dbReference type="ChEBI" id="CHEBI:57288"/>
        <dbReference type="ChEBI" id="CHEBI:58342"/>
        <dbReference type="ChEBI" id="CHEBI:90726"/>
        <dbReference type="EC" id="2.3.1.16"/>
    </reaction>
    <physiologicalReaction direction="right-to-left" evidence="1">
        <dbReference type="Rhea" id="RHEA:21566"/>
    </physiologicalReaction>
</comment>
<comment type="catalytic activity">
    <reaction evidence="1">
        <text>butanoyl-CoA + acetyl-CoA = 3-oxohexanoyl-CoA + CoA</text>
        <dbReference type="Rhea" id="RHEA:31111"/>
        <dbReference type="ChEBI" id="CHEBI:57287"/>
        <dbReference type="ChEBI" id="CHEBI:57288"/>
        <dbReference type="ChEBI" id="CHEBI:57371"/>
        <dbReference type="ChEBI" id="CHEBI:62418"/>
    </reaction>
    <physiologicalReaction direction="right-to-left" evidence="1">
        <dbReference type="Rhea" id="RHEA:31113"/>
    </physiologicalReaction>
</comment>
<comment type="catalytic activity">
    <reaction evidence="1">
        <text>hexanoyl-CoA + acetyl-CoA = 3-oxooctanoyl-CoA + CoA</text>
        <dbReference type="Rhea" id="RHEA:31203"/>
        <dbReference type="ChEBI" id="CHEBI:57287"/>
        <dbReference type="ChEBI" id="CHEBI:57288"/>
        <dbReference type="ChEBI" id="CHEBI:62619"/>
        <dbReference type="ChEBI" id="CHEBI:62620"/>
    </reaction>
    <physiologicalReaction direction="right-to-left" evidence="1">
        <dbReference type="Rhea" id="RHEA:31205"/>
    </physiologicalReaction>
</comment>
<comment type="catalytic activity">
    <reaction evidence="1">
        <text>octanoyl-CoA + acetyl-CoA = 3-oxodecanoyl-CoA + CoA</text>
        <dbReference type="Rhea" id="RHEA:31087"/>
        <dbReference type="ChEBI" id="CHEBI:57287"/>
        <dbReference type="ChEBI" id="CHEBI:57288"/>
        <dbReference type="ChEBI" id="CHEBI:57386"/>
        <dbReference type="ChEBI" id="CHEBI:62548"/>
    </reaction>
    <physiologicalReaction direction="right-to-left" evidence="1">
        <dbReference type="Rhea" id="RHEA:31089"/>
    </physiologicalReaction>
</comment>
<comment type="catalytic activity">
    <reaction evidence="1">
        <text>decanoyl-CoA + acetyl-CoA = 3-oxododecanoyl-CoA + CoA</text>
        <dbReference type="Rhea" id="RHEA:31183"/>
        <dbReference type="ChEBI" id="CHEBI:57287"/>
        <dbReference type="ChEBI" id="CHEBI:57288"/>
        <dbReference type="ChEBI" id="CHEBI:61430"/>
        <dbReference type="ChEBI" id="CHEBI:62615"/>
    </reaction>
    <physiologicalReaction direction="right-to-left" evidence="1">
        <dbReference type="Rhea" id="RHEA:31185"/>
    </physiologicalReaction>
</comment>
<comment type="catalytic activity">
    <reaction evidence="1">
        <text>dodecanoyl-CoA + acetyl-CoA = 3-oxotetradecanoyl-CoA + CoA</text>
        <dbReference type="Rhea" id="RHEA:31091"/>
        <dbReference type="ChEBI" id="CHEBI:57287"/>
        <dbReference type="ChEBI" id="CHEBI:57288"/>
        <dbReference type="ChEBI" id="CHEBI:57375"/>
        <dbReference type="ChEBI" id="CHEBI:62543"/>
    </reaction>
    <physiologicalReaction direction="right-to-left" evidence="1">
        <dbReference type="Rhea" id="RHEA:31093"/>
    </physiologicalReaction>
</comment>
<comment type="catalytic activity">
    <reaction evidence="1">
        <text>tetradecanoyl-CoA + acetyl-CoA = 3-oxohexadecanoyl-CoA + CoA</text>
        <dbReference type="Rhea" id="RHEA:18161"/>
        <dbReference type="ChEBI" id="CHEBI:57287"/>
        <dbReference type="ChEBI" id="CHEBI:57288"/>
        <dbReference type="ChEBI" id="CHEBI:57349"/>
        <dbReference type="ChEBI" id="CHEBI:57385"/>
        <dbReference type="EC" id="2.3.1.155"/>
    </reaction>
    <physiologicalReaction direction="right-to-left" evidence="1">
        <dbReference type="Rhea" id="RHEA:18163"/>
    </physiologicalReaction>
</comment>
<comment type="pathway">
    <text evidence="1">Lipid metabolism; fatty acid beta-oxidation.</text>
</comment>
<comment type="subunit">
    <text evidence="1 2">Heterotetramer of 2 alpha/HADHA and 2 beta/HADHB subunits; forms the mitochondrial trifunctional enzyme. Also purified as higher order heterooligomers including a 4 alpha/HADHA and 4 beta/HADHB heterooligomer which physiological significance remains unclear. The mitochondrial trifunctional enzyme interacts with MTLN. Interacts with RSAD2/viperin.</text>
</comment>
<comment type="subcellular location">
    <subcellularLocation>
        <location evidence="1">Mitochondrion</location>
    </subcellularLocation>
    <subcellularLocation>
        <location evidence="1">Mitochondrion inner membrane</location>
    </subcellularLocation>
    <subcellularLocation>
        <location evidence="1">Mitochondrion outer membrane</location>
    </subcellularLocation>
    <subcellularLocation>
        <location evidence="1">Endoplasmic reticulum</location>
    </subcellularLocation>
    <text evidence="1">Protein stability and association with membranes require HADHA.</text>
</comment>
<comment type="similarity">
    <text evidence="5">Belongs to the thiolase-like superfamily. Thiolase family.</text>
</comment>
<protein>
    <recommendedName>
        <fullName>Trifunctional enzyme subunit beta, mitochondrial</fullName>
    </recommendedName>
    <alternativeName>
        <fullName>TP-beta</fullName>
    </alternativeName>
    <domain>
        <recommendedName>
            <fullName>3-ketoacyl-CoA thiolase</fullName>
            <ecNumber evidence="1">2.3.1.155</ecNumber>
            <ecNumber evidence="1">2.3.1.16</ecNumber>
        </recommendedName>
        <alternativeName>
            <fullName>Acetyl-CoA acyltransferase</fullName>
        </alternativeName>
        <alternativeName>
            <fullName>Beta-ketothiolase</fullName>
        </alternativeName>
    </domain>
</protein>
<gene>
    <name type="primary">HADHB</name>
</gene>
<sequence length="475" mass="51345">MISLLTYTLKNLPNTSKWALRFCMRPLSSSSQLQAAAASQTKSKKTLAKPNIRNIVVVDGVRTPFLLSGTSYKDLMPHDLARAALSGLLHRTSVPKDVVDYIIFGTVIQEVKTSNVAREAALGAGFSDKTPAHTVTMACISSNQAMTTAVGLIASGQCDVVVAGGVELMSDIPIRHSRKMRKMMLDLNKAKTLAQRLSIISKFRLNFLSPELPAVSEFSTSETMGHSADRLAAAFAISREEQDEYALRSHSLAKKAQDEGLLSDVVPFKVPGRDTVTQDNGIRPSSLDQMAKLKPAFIKPYGTVTAANSSFLTDGASAVLIMAEEKALAMGYKPKAYLRDFMYVSQDPKDQLLLGPTYATPKVLEKAGLTMNDIDVFEFHEAFSGQILANLKAMDSDWFAQNYMGRKAKVGLPPLEKFNNWGGSLSLGHPFGATGCRLVMAAANRLRKEGGQYGLVAACAAGGQGHAMIVEAYPK</sequence>
<organism>
    <name type="scientific">Bos taurus</name>
    <name type="common">Bovine</name>
    <dbReference type="NCBI Taxonomy" id="9913"/>
    <lineage>
        <taxon>Eukaryota</taxon>
        <taxon>Metazoa</taxon>
        <taxon>Chordata</taxon>
        <taxon>Craniata</taxon>
        <taxon>Vertebrata</taxon>
        <taxon>Euteleostomi</taxon>
        <taxon>Mammalia</taxon>
        <taxon>Eutheria</taxon>
        <taxon>Laurasiatheria</taxon>
        <taxon>Artiodactyla</taxon>
        <taxon>Ruminantia</taxon>
        <taxon>Pecora</taxon>
        <taxon>Bovidae</taxon>
        <taxon>Bovinae</taxon>
        <taxon>Bos</taxon>
    </lineage>
</organism>
<evidence type="ECO:0000250" key="1">
    <source>
        <dbReference type="UniProtKB" id="P55084"/>
    </source>
</evidence>
<evidence type="ECO:0000250" key="2">
    <source>
        <dbReference type="UniProtKB" id="Q8BMS1"/>
    </source>
</evidence>
<evidence type="ECO:0000250" key="3">
    <source>
        <dbReference type="UniProtKB" id="Q99JY0"/>
    </source>
</evidence>
<evidence type="ECO:0000255" key="4"/>
<evidence type="ECO:0000305" key="5"/>
<reference key="1">
    <citation type="submission" date="1997-11" db="EMBL/GenBank/DDBJ databases">
        <authorList>
            <person name="Cailleret K."/>
            <person name="Chevet E."/>
            <person name="Lemaitre G."/>
            <person name="Dahan S."/>
            <person name="Bergeron J.J."/>
            <person name="Katinka M.D."/>
        </authorList>
    </citation>
    <scope>NUCLEOTIDE SEQUENCE [MRNA]</scope>
    <source>
        <tissue>Brain</tissue>
    </source>
</reference>
<reference key="2">
    <citation type="submission" date="2005-08" db="EMBL/GenBank/DDBJ databases">
        <authorList>
            <consortium name="NIH - Mammalian Gene Collection (MGC) project"/>
        </authorList>
    </citation>
    <scope>NUCLEOTIDE SEQUENCE [LARGE SCALE MRNA]</scope>
    <source>
        <strain>Crossbred X Angus</strain>
        <tissue>Ileum</tissue>
    </source>
</reference>
<dbReference type="EC" id="2.3.1.155" evidence="1"/>
<dbReference type="EC" id="2.3.1.16" evidence="1"/>
<dbReference type="EMBL" id="AJ003066">
    <property type="protein sequence ID" value="CAA05840.1"/>
    <property type="molecule type" value="mRNA"/>
</dbReference>
<dbReference type="EMBL" id="BC102638">
    <property type="protein sequence ID" value="AAI02639.1"/>
    <property type="molecule type" value="mRNA"/>
</dbReference>
<dbReference type="RefSeq" id="NP_776761.1">
    <property type="nucleotide sequence ID" value="NM_174336.3"/>
</dbReference>
<dbReference type="RefSeq" id="XP_005212988.1">
    <property type="nucleotide sequence ID" value="XM_005212931.3"/>
</dbReference>
<dbReference type="SMR" id="O46629"/>
<dbReference type="FunCoup" id="O46629">
    <property type="interactions" value="1194"/>
</dbReference>
<dbReference type="STRING" id="9913.ENSBTAP00000070545"/>
<dbReference type="PaxDb" id="9913-ENSBTAP00000013310"/>
<dbReference type="PeptideAtlas" id="O46629"/>
<dbReference type="Ensembl" id="ENSBTAT00000013310.3">
    <property type="protein sequence ID" value="ENSBTAP00000013310.2"/>
    <property type="gene ID" value="ENSBTAG00000010083.6"/>
</dbReference>
<dbReference type="GeneID" id="281811"/>
<dbReference type="KEGG" id="bta:281811"/>
<dbReference type="CTD" id="3032"/>
<dbReference type="VEuPathDB" id="HostDB:ENSBTAG00000010083"/>
<dbReference type="VGNC" id="VGNC:49554">
    <property type="gene designation" value="HADHB"/>
</dbReference>
<dbReference type="eggNOG" id="KOG1392">
    <property type="taxonomic scope" value="Eukaryota"/>
</dbReference>
<dbReference type="GeneTree" id="ENSGT01030000234626"/>
<dbReference type="HOGENOM" id="CLU_031026_2_0_1"/>
<dbReference type="InParanoid" id="O46629"/>
<dbReference type="OMA" id="MTAFPEP"/>
<dbReference type="OrthoDB" id="5404651at2759"/>
<dbReference type="TreeFam" id="TF315243"/>
<dbReference type="Reactome" id="R-BTA-1482798">
    <property type="pathway name" value="Acyl chain remodeling of CL"/>
</dbReference>
<dbReference type="Reactome" id="R-BTA-77285">
    <property type="pathway name" value="Beta oxidation of myristoyl-CoA to lauroyl-CoA"/>
</dbReference>
<dbReference type="Reactome" id="R-BTA-77305">
    <property type="pathway name" value="Beta oxidation of palmitoyl-CoA to myristoyl-CoA"/>
</dbReference>
<dbReference type="Reactome" id="R-BTA-77310">
    <property type="pathway name" value="Beta oxidation of lauroyl-CoA to decanoyl-CoA-CoA"/>
</dbReference>
<dbReference type="Reactome" id="R-BTA-77346">
    <property type="pathway name" value="Beta oxidation of decanoyl-CoA to octanoyl-CoA-CoA"/>
</dbReference>
<dbReference type="Reactome" id="R-BTA-77348">
    <property type="pathway name" value="Beta oxidation of octanoyl-CoA to hexanoyl-CoA"/>
</dbReference>
<dbReference type="Reactome" id="R-BTA-77350">
    <property type="pathway name" value="Beta oxidation of hexanoyl-CoA to butanoyl-CoA"/>
</dbReference>
<dbReference type="UniPathway" id="UPA00659"/>
<dbReference type="Proteomes" id="UP000009136">
    <property type="component" value="Chromosome 11"/>
</dbReference>
<dbReference type="Bgee" id="ENSBTAG00000010083">
    <property type="expression patterns" value="Expressed in corpus luteum and 103 other cell types or tissues"/>
</dbReference>
<dbReference type="GO" id="GO:0005783">
    <property type="term" value="C:endoplasmic reticulum"/>
    <property type="evidence" value="ECO:0000250"/>
    <property type="project" value="UniProtKB"/>
</dbReference>
<dbReference type="GO" id="GO:0016507">
    <property type="term" value="C:mitochondrial fatty acid beta-oxidation multienzyme complex"/>
    <property type="evidence" value="ECO:0000318"/>
    <property type="project" value="GO_Central"/>
</dbReference>
<dbReference type="GO" id="GO:0005743">
    <property type="term" value="C:mitochondrial inner membrane"/>
    <property type="evidence" value="ECO:0000250"/>
    <property type="project" value="UniProtKB"/>
</dbReference>
<dbReference type="GO" id="GO:0005741">
    <property type="term" value="C:mitochondrial outer membrane"/>
    <property type="evidence" value="ECO:0000250"/>
    <property type="project" value="UniProtKB"/>
</dbReference>
<dbReference type="GO" id="GO:0003985">
    <property type="term" value="F:acetyl-CoA C-acetyltransferase activity"/>
    <property type="evidence" value="ECO:0000318"/>
    <property type="project" value="GO_Central"/>
</dbReference>
<dbReference type="GO" id="GO:0050633">
    <property type="term" value="F:acetyl-CoA C-myristoyltransferase activity"/>
    <property type="evidence" value="ECO:0007669"/>
    <property type="project" value="UniProtKB-EC"/>
</dbReference>
<dbReference type="GO" id="GO:0006635">
    <property type="term" value="P:fatty acid beta-oxidation"/>
    <property type="evidence" value="ECO:0000318"/>
    <property type="project" value="GO_Central"/>
</dbReference>
<dbReference type="CDD" id="cd00751">
    <property type="entry name" value="thiolase"/>
    <property type="match status" value="1"/>
</dbReference>
<dbReference type="FunFam" id="3.40.47.10:FF:000020">
    <property type="entry name" value="Putative trifunctional enzyme subunit beta mitochondrial"/>
    <property type="match status" value="1"/>
</dbReference>
<dbReference type="Gene3D" id="3.40.47.10">
    <property type="match status" value="1"/>
</dbReference>
<dbReference type="InterPro" id="IPR002155">
    <property type="entry name" value="Thiolase"/>
</dbReference>
<dbReference type="InterPro" id="IPR016039">
    <property type="entry name" value="Thiolase-like"/>
</dbReference>
<dbReference type="InterPro" id="IPR020615">
    <property type="entry name" value="Thiolase_acyl_enz_int_AS"/>
</dbReference>
<dbReference type="InterPro" id="IPR020610">
    <property type="entry name" value="Thiolase_AS"/>
</dbReference>
<dbReference type="InterPro" id="IPR020617">
    <property type="entry name" value="Thiolase_C"/>
</dbReference>
<dbReference type="InterPro" id="IPR020613">
    <property type="entry name" value="Thiolase_CS"/>
</dbReference>
<dbReference type="InterPro" id="IPR020616">
    <property type="entry name" value="Thiolase_N"/>
</dbReference>
<dbReference type="NCBIfam" id="TIGR01930">
    <property type="entry name" value="AcCoA-C-Actrans"/>
    <property type="match status" value="1"/>
</dbReference>
<dbReference type="PANTHER" id="PTHR18919">
    <property type="entry name" value="ACETYL-COA C-ACYLTRANSFERASE"/>
    <property type="match status" value="1"/>
</dbReference>
<dbReference type="PANTHER" id="PTHR18919:SF153">
    <property type="entry name" value="TRIFUNCTIONAL ENZYME SUBUNIT BETA, MITOCHONDRIAL"/>
    <property type="match status" value="1"/>
</dbReference>
<dbReference type="Pfam" id="PF02803">
    <property type="entry name" value="Thiolase_C"/>
    <property type="match status" value="1"/>
</dbReference>
<dbReference type="Pfam" id="PF00108">
    <property type="entry name" value="Thiolase_N"/>
    <property type="match status" value="1"/>
</dbReference>
<dbReference type="SUPFAM" id="SSF53901">
    <property type="entry name" value="Thiolase-like"/>
    <property type="match status" value="2"/>
</dbReference>
<dbReference type="PROSITE" id="PS00098">
    <property type="entry name" value="THIOLASE_1"/>
    <property type="match status" value="1"/>
</dbReference>
<dbReference type="PROSITE" id="PS00737">
    <property type="entry name" value="THIOLASE_2"/>
    <property type="match status" value="1"/>
</dbReference>
<dbReference type="PROSITE" id="PS00099">
    <property type="entry name" value="THIOLASE_3"/>
    <property type="match status" value="1"/>
</dbReference>
<keyword id="KW-0007">Acetylation</keyword>
<keyword id="KW-0012">Acyltransferase</keyword>
<keyword id="KW-0256">Endoplasmic reticulum</keyword>
<keyword id="KW-0276">Fatty acid metabolism</keyword>
<keyword id="KW-0443">Lipid metabolism</keyword>
<keyword id="KW-0472">Membrane</keyword>
<keyword id="KW-0496">Mitochondrion</keyword>
<keyword id="KW-0999">Mitochondrion inner membrane</keyword>
<keyword id="KW-1000">Mitochondrion outer membrane</keyword>
<keyword id="KW-1185">Reference proteome</keyword>
<keyword id="KW-0808">Transferase</keyword>
<keyword id="KW-0809">Transit peptide</keyword>
<accession>O46629</accession>
<accession>Q3SZZ3</accession>
<name>ECHB_BOVIN</name>
<feature type="transit peptide" description="Mitochondrion" evidence="4">
    <location>
        <begin position="1"/>
        <end position="34"/>
    </location>
</feature>
<feature type="chain" id="PRO_0000034079" description="Trifunctional enzyme subunit beta, mitochondrial">
    <location>
        <begin position="35"/>
        <end position="475"/>
    </location>
</feature>
<feature type="intramembrane region" evidence="1">
    <location>
        <begin position="174"/>
        <end position="221"/>
    </location>
</feature>
<feature type="active site" description="Acyl-thioester intermediate" evidence="1">
    <location>
        <position position="139"/>
    </location>
</feature>
<feature type="active site" description="Proton donor/acceptor" evidence="1">
    <location>
        <position position="459"/>
    </location>
</feature>
<feature type="site" description="Increases nucleophilicity of active site Cys" evidence="1">
    <location>
        <position position="429"/>
    </location>
</feature>
<feature type="modified residue" description="N6-acetyllysine; alternate" evidence="1">
    <location>
        <position position="73"/>
    </location>
</feature>
<feature type="modified residue" description="N6-succinyllysine; alternate" evidence="3">
    <location>
        <position position="73"/>
    </location>
</feature>
<feature type="modified residue" description="N6-acetyllysine; alternate" evidence="1">
    <location>
        <position position="189"/>
    </location>
</feature>
<feature type="modified residue" description="N6-succinyllysine; alternate" evidence="3">
    <location>
        <position position="189"/>
    </location>
</feature>
<feature type="modified residue" description="N6-succinyllysine" evidence="3">
    <location>
        <position position="191"/>
    </location>
</feature>
<feature type="modified residue" description="N6-succinyllysine" evidence="3">
    <location>
        <position position="292"/>
    </location>
</feature>
<feature type="modified residue" description="N6-acetyllysine; alternate" evidence="3">
    <location>
        <position position="294"/>
    </location>
</feature>
<feature type="modified residue" description="N6-succinyllysine; alternate" evidence="3">
    <location>
        <position position="294"/>
    </location>
</feature>
<feature type="modified residue" description="N6-acetyllysine" evidence="3">
    <location>
        <position position="299"/>
    </location>
</feature>
<feature type="modified residue" description="N6-acetyllysine; alternate" evidence="3">
    <location>
        <position position="333"/>
    </location>
</feature>
<feature type="modified residue" description="N6-succinyllysine; alternate" evidence="3">
    <location>
        <position position="333"/>
    </location>
</feature>
<feature type="modified residue" description="N6-acetyllysine" evidence="3">
    <location>
        <position position="349"/>
    </location>
</feature>
<feature type="modified residue" description="N6-acetyllysine" evidence="3">
    <location>
        <position position="362"/>
    </location>
</feature>